<organism>
    <name type="scientific">Salinispora tropica (strain ATCC BAA-916 / DSM 44818 / JCM 13857 / NBRC 105044 / CNB-440)</name>
    <dbReference type="NCBI Taxonomy" id="369723"/>
    <lineage>
        <taxon>Bacteria</taxon>
        <taxon>Bacillati</taxon>
        <taxon>Actinomycetota</taxon>
        <taxon>Actinomycetes</taxon>
        <taxon>Micromonosporales</taxon>
        <taxon>Micromonosporaceae</taxon>
        <taxon>Salinispora</taxon>
    </lineage>
</organism>
<accession>A4XAM8</accession>
<protein>
    <recommendedName>
        <fullName evidence="1">Nicotinate-nucleotide--dimethylbenzimidazole phosphoribosyltransferase</fullName>
        <shortName evidence="1">NN:DBI PRT</shortName>
        <ecNumber evidence="1">2.4.2.21</ecNumber>
    </recommendedName>
    <alternativeName>
        <fullName evidence="1">N(1)-alpha-phosphoribosyltransferase</fullName>
    </alternativeName>
</protein>
<comment type="function">
    <text evidence="1">Catalyzes the synthesis of alpha-ribazole-5'-phosphate from nicotinate mononucleotide (NAMN) and 5,6-dimethylbenzimidazole (DMB).</text>
</comment>
<comment type="catalytic activity">
    <reaction evidence="1">
        <text>5,6-dimethylbenzimidazole + nicotinate beta-D-ribonucleotide = alpha-ribazole 5'-phosphate + nicotinate + H(+)</text>
        <dbReference type="Rhea" id="RHEA:11196"/>
        <dbReference type="ChEBI" id="CHEBI:15378"/>
        <dbReference type="ChEBI" id="CHEBI:15890"/>
        <dbReference type="ChEBI" id="CHEBI:32544"/>
        <dbReference type="ChEBI" id="CHEBI:57502"/>
        <dbReference type="ChEBI" id="CHEBI:57918"/>
        <dbReference type="EC" id="2.4.2.21"/>
    </reaction>
</comment>
<comment type="pathway">
    <text evidence="1">Nucleoside biosynthesis; alpha-ribazole biosynthesis; alpha-ribazole from 5,6-dimethylbenzimidazole: step 1/2.</text>
</comment>
<comment type="similarity">
    <text evidence="1">Belongs to the CobT family.</text>
</comment>
<proteinExistence type="inferred from homology"/>
<dbReference type="EC" id="2.4.2.21" evidence="1"/>
<dbReference type="EMBL" id="CP000667">
    <property type="protein sequence ID" value="ABP55977.1"/>
    <property type="molecule type" value="Genomic_DNA"/>
</dbReference>
<dbReference type="SMR" id="A4XAM8"/>
<dbReference type="STRING" id="369723.Strop_3546"/>
<dbReference type="KEGG" id="stp:Strop_3546"/>
<dbReference type="eggNOG" id="COG2038">
    <property type="taxonomic scope" value="Bacteria"/>
</dbReference>
<dbReference type="HOGENOM" id="CLU_002982_0_0_11"/>
<dbReference type="UniPathway" id="UPA00061">
    <property type="reaction ID" value="UER00516"/>
</dbReference>
<dbReference type="Proteomes" id="UP000000235">
    <property type="component" value="Chromosome"/>
</dbReference>
<dbReference type="GO" id="GO:0008939">
    <property type="term" value="F:nicotinate-nucleotide-dimethylbenzimidazole phosphoribosyltransferase activity"/>
    <property type="evidence" value="ECO:0007669"/>
    <property type="project" value="UniProtKB-UniRule"/>
</dbReference>
<dbReference type="GO" id="GO:0009236">
    <property type="term" value="P:cobalamin biosynthetic process"/>
    <property type="evidence" value="ECO:0007669"/>
    <property type="project" value="UniProtKB-KW"/>
</dbReference>
<dbReference type="CDD" id="cd02439">
    <property type="entry name" value="DMB-PRT_CobT"/>
    <property type="match status" value="1"/>
</dbReference>
<dbReference type="FunFam" id="3.40.50.10210:FF:000001">
    <property type="entry name" value="Nicotinate-nucleotide--dimethylbenzimidazole phosphoribosyltransferase"/>
    <property type="match status" value="1"/>
</dbReference>
<dbReference type="Gene3D" id="1.10.1610.10">
    <property type="match status" value="1"/>
</dbReference>
<dbReference type="Gene3D" id="3.40.50.10210">
    <property type="match status" value="1"/>
</dbReference>
<dbReference type="HAMAP" id="MF_00230">
    <property type="entry name" value="CobT"/>
    <property type="match status" value="1"/>
</dbReference>
<dbReference type="InterPro" id="IPR003200">
    <property type="entry name" value="Nict_dMeBzImd_PRibTrfase"/>
</dbReference>
<dbReference type="InterPro" id="IPR017846">
    <property type="entry name" value="Nict_dMeBzImd_PRibTrfase_bact"/>
</dbReference>
<dbReference type="InterPro" id="IPR023195">
    <property type="entry name" value="Nict_dMeBzImd_PRibTrfase_N"/>
</dbReference>
<dbReference type="InterPro" id="IPR036087">
    <property type="entry name" value="Nict_dMeBzImd_PRibTrfase_sf"/>
</dbReference>
<dbReference type="NCBIfam" id="TIGR03160">
    <property type="entry name" value="cobT_DBIPRT"/>
    <property type="match status" value="1"/>
</dbReference>
<dbReference type="NCBIfam" id="NF000996">
    <property type="entry name" value="PRK00105.1"/>
    <property type="match status" value="1"/>
</dbReference>
<dbReference type="PANTHER" id="PTHR43463">
    <property type="entry name" value="NICOTINATE-NUCLEOTIDE--DIMETHYLBENZIMIDAZOLE PHOSPHORIBOSYLTRANSFERASE"/>
    <property type="match status" value="1"/>
</dbReference>
<dbReference type="PANTHER" id="PTHR43463:SF1">
    <property type="entry name" value="NICOTINATE-NUCLEOTIDE--DIMETHYLBENZIMIDAZOLE PHOSPHORIBOSYLTRANSFERASE"/>
    <property type="match status" value="1"/>
</dbReference>
<dbReference type="Pfam" id="PF02277">
    <property type="entry name" value="DBI_PRT"/>
    <property type="match status" value="1"/>
</dbReference>
<dbReference type="SUPFAM" id="SSF52733">
    <property type="entry name" value="Nicotinate mononucleotide:5,6-dimethylbenzimidazole phosphoribosyltransferase (CobT)"/>
    <property type="match status" value="1"/>
</dbReference>
<name>COBT_SALTO</name>
<feature type="chain" id="PRO_1000118971" description="Nicotinate-nucleotide--dimethylbenzimidazole phosphoribosyltransferase">
    <location>
        <begin position="1"/>
        <end position="364"/>
    </location>
</feature>
<feature type="active site" description="Proton acceptor" evidence="1">
    <location>
        <position position="332"/>
    </location>
</feature>
<reference key="1">
    <citation type="journal article" date="2007" name="Proc. Natl. Acad. Sci. U.S.A.">
        <title>Genome sequencing reveals complex secondary metabolome in the marine actinomycete Salinispora tropica.</title>
        <authorList>
            <person name="Udwary D.W."/>
            <person name="Zeigler L."/>
            <person name="Asolkar R.N."/>
            <person name="Singan V."/>
            <person name="Lapidus A."/>
            <person name="Fenical W."/>
            <person name="Jensen P.R."/>
            <person name="Moore B.S."/>
        </authorList>
    </citation>
    <scope>NUCLEOTIDE SEQUENCE [LARGE SCALE GENOMIC DNA]</scope>
    <source>
        <strain>ATCC BAA-916 / DSM 44818 / JCM 13857 / NBRC 105044 / CNB-440</strain>
    </source>
</reference>
<gene>
    <name evidence="1" type="primary">cobT</name>
    <name type="ordered locus">Strop_3546</name>
</gene>
<evidence type="ECO:0000255" key="1">
    <source>
        <dbReference type="HAMAP-Rule" id="MF_00230"/>
    </source>
</evidence>
<sequence>MMLERTTAAIGPLDEQAMATAADLQSRLTKPAGSLGVLEELSVRLAGLAGVCPPPLPEPAAVAVFAGDHGVHAQGVTPWPQEVTGQMIGNFLAGGAVVNAFARQTGATVTVVDVGVAAPPTSIETAPPESATASGARPRLVEANIRRGTRDLTVTAALTRDEARAAVETGIRVADELVDAGAAILLTGDMGIGNTTPAAALIAVFAEADPATVTGRGTGVDDPTHQRKIEVVRAALRRHEPDPADPLGVLAAVGGLEHAALAGLILGAAAQRVPVLLDGVIADSAALAAAAFAPSATGAMVAGHRSVEPGATVALRRLGLTPLVDLGLRLGEGTGALLALPVVAGAVRVLHEVATFDSAGVAQK</sequence>
<keyword id="KW-0169">Cobalamin biosynthesis</keyword>
<keyword id="KW-0328">Glycosyltransferase</keyword>
<keyword id="KW-1185">Reference proteome</keyword>
<keyword id="KW-0808">Transferase</keyword>